<evidence type="ECO:0000255" key="1">
    <source>
        <dbReference type="HAMAP-Rule" id="MF_00121"/>
    </source>
</evidence>
<comment type="function">
    <text evidence="1">Allows the formation of correctly charged Asn-tRNA(Asn) or Gln-tRNA(Gln) through the transamidation of misacylated Asp-tRNA(Asn) or Glu-tRNA(Gln) in organisms which lack either or both of asparaginyl-tRNA or glutaminyl-tRNA synthetases. The reaction takes place in the presence of glutamine and ATP through an activated phospho-Asp-tRNA(Asn) or phospho-Glu-tRNA(Gln).</text>
</comment>
<comment type="catalytic activity">
    <reaction evidence="1">
        <text>L-glutamyl-tRNA(Gln) + L-glutamine + ATP + H2O = L-glutaminyl-tRNA(Gln) + L-glutamate + ADP + phosphate + H(+)</text>
        <dbReference type="Rhea" id="RHEA:17521"/>
        <dbReference type="Rhea" id="RHEA-COMP:9681"/>
        <dbReference type="Rhea" id="RHEA-COMP:9684"/>
        <dbReference type="ChEBI" id="CHEBI:15377"/>
        <dbReference type="ChEBI" id="CHEBI:15378"/>
        <dbReference type="ChEBI" id="CHEBI:29985"/>
        <dbReference type="ChEBI" id="CHEBI:30616"/>
        <dbReference type="ChEBI" id="CHEBI:43474"/>
        <dbReference type="ChEBI" id="CHEBI:58359"/>
        <dbReference type="ChEBI" id="CHEBI:78520"/>
        <dbReference type="ChEBI" id="CHEBI:78521"/>
        <dbReference type="ChEBI" id="CHEBI:456216"/>
    </reaction>
</comment>
<comment type="catalytic activity">
    <reaction evidence="1">
        <text>L-aspartyl-tRNA(Asn) + L-glutamine + ATP + H2O = L-asparaginyl-tRNA(Asn) + L-glutamate + ADP + phosphate + 2 H(+)</text>
        <dbReference type="Rhea" id="RHEA:14513"/>
        <dbReference type="Rhea" id="RHEA-COMP:9674"/>
        <dbReference type="Rhea" id="RHEA-COMP:9677"/>
        <dbReference type="ChEBI" id="CHEBI:15377"/>
        <dbReference type="ChEBI" id="CHEBI:15378"/>
        <dbReference type="ChEBI" id="CHEBI:29985"/>
        <dbReference type="ChEBI" id="CHEBI:30616"/>
        <dbReference type="ChEBI" id="CHEBI:43474"/>
        <dbReference type="ChEBI" id="CHEBI:58359"/>
        <dbReference type="ChEBI" id="CHEBI:78515"/>
        <dbReference type="ChEBI" id="CHEBI:78516"/>
        <dbReference type="ChEBI" id="CHEBI:456216"/>
    </reaction>
</comment>
<comment type="subunit">
    <text evidence="1">Heterotrimer of A, B and C subunits.</text>
</comment>
<comment type="similarity">
    <text evidence="1">Belongs to the GatB/GatE family. GatB subfamily.</text>
</comment>
<dbReference type="EC" id="6.3.5.-" evidence="1"/>
<dbReference type="EMBL" id="AP006716">
    <property type="protein sequence ID" value="BAE04362.1"/>
    <property type="molecule type" value="Genomic_DNA"/>
</dbReference>
<dbReference type="RefSeq" id="WP_011275358.1">
    <property type="nucleotide sequence ID" value="NC_007168.1"/>
</dbReference>
<dbReference type="SMR" id="Q4L7L3"/>
<dbReference type="KEGG" id="sha:SH1053"/>
<dbReference type="eggNOG" id="COG0064">
    <property type="taxonomic scope" value="Bacteria"/>
</dbReference>
<dbReference type="HOGENOM" id="CLU_019240_0_0_9"/>
<dbReference type="OrthoDB" id="9804078at2"/>
<dbReference type="Proteomes" id="UP000000543">
    <property type="component" value="Chromosome"/>
</dbReference>
<dbReference type="GO" id="GO:0050566">
    <property type="term" value="F:asparaginyl-tRNA synthase (glutamine-hydrolyzing) activity"/>
    <property type="evidence" value="ECO:0007669"/>
    <property type="project" value="RHEA"/>
</dbReference>
<dbReference type="GO" id="GO:0005524">
    <property type="term" value="F:ATP binding"/>
    <property type="evidence" value="ECO:0007669"/>
    <property type="project" value="UniProtKB-KW"/>
</dbReference>
<dbReference type="GO" id="GO:0050567">
    <property type="term" value="F:glutaminyl-tRNA synthase (glutamine-hydrolyzing) activity"/>
    <property type="evidence" value="ECO:0007669"/>
    <property type="project" value="UniProtKB-UniRule"/>
</dbReference>
<dbReference type="GO" id="GO:0070681">
    <property type="term" value="P:glutaminyl-tRNAGln biosynthesis via transamidation"/>
    <property type="evidence" value="ECO:0007669"/>
    <property type="project" value="TreeGrafter"/>
</dbReference>
<dbReference type="GO" id="GO:0006412">
    <property type="term" value="P:translation"/>
    <property type="evidence" value="ECO:0007669"/>
    <property type="project" value="UniProtKB-UniRule"/>
</dbReference>
<dbReference type="FunFam" id="1.10.10.410:FF:000001">
    <property type="entry name" value="Aspartyl/glutamyl-tRNA(Asn/Gln) amidotransferase subunit B"/>
    <property type="match status" value="1"/>
</dbReference>
<dbReference type="FunFam" id="1.10.150.380:FF:000001">
    <property type="entry name" value="Aspartyl/glutamyl-tRNA(Asn/Gln) amidotransferase subunit B"/>
    <property type="match status" value="1"/>
</dbReference>
<dbReference type="Gene3D" id="1.10.10.410">
    <property type="match status" value="1"/>
</dbReference>
<dbReference type="Gene3D" id="1.10.150.380">
    <property type="entry name" value="GatB domain, N-terminal subdomain"/>
    <property type="match status" value="1"/>
</dbReference>
<dbReference type="HAMAP" id="MF_00121">
    <property type="entry name" value="GatB"/>
    <property type="match status" value="1"/>
</dbReference>
<dbReference type="InterPro" id="IPR017959">
    <property type="entry name" value="Asn/Gln-tRNA_amidoTrfase_suB/E"/>
</dbReference>
<dbReference type="InterPro" id="IPR006075">
    <property type="entry name" value="Asn/Gln-tRNA_Trfase_suB/E_cat"/>
</dbReference>
<dbReference type="InterPro" id="IPR018027">
    <property type="entry name" value="Asn/Gln_amidotransferase"/>
</dbReference>
<dbReference type="InterPro" id="IPR003789">
    <property type="entry name" value="Asn/Gln_tRNA_amidoTrase-B-like"/>
</dbReference>
<dbReference type="InterPro" id="IPR004413">
    <property type="entry name" value="GatB"/>
</dbReference>
<dbReference type="InterPro" id="IPR042114">
    <property type="entry name" value="GatB_C_1"/>
</dbReference>
<dbReference type="InterPro" id="IPR023168">
    <property type="entry name" value="GatB_Yqey_C_2"/>
</dbReference>
<dbReference type="InterPro" id="IPR017958">
    <property type="entry name" value="Gln-tRNA_amidoTrfase_suB_CS"/>
</dbReference>
<dbReference type="InterPro" id="IPR014746">
    <property type="entry name" value="Gln_synth/guanido_kin_cat_dom"/>
</dbReference>
<dbReference type="NCBIfam" id="TIGR00133">
    <property type="entry name" value="gatB"/>
    <property type="match status" value="1"/>
</dbReference>
<dbReference type="NCBIfam" id="NF004011">
    <property type="entry name" value="PRK05477.1-1"/>
    <property type="match status" value="1"/>
</dbReference>
<dbReference type="NCBIfam" id="NF004012">
    <property type="entry name" value="PRK05477.1-2"/>
    <property type="match status" value="1"/>
</dbReference>
<dbReference type="NCBIfam" id="NF004014">
    <property type="entry name" value="PRK05477.1-4"/>
    <property type="match status" value="1"/>
</dbReference>
<dbReference type="PANTHER" id="PTHR11659">
    <property type="entry name" value="GLUTAMYL-TRNA GLN AMIDOTRANSFERASE SUBUNIT B MITOCHONDRIAL AND PROKARYOTIC PET112-RELATED"/>
    <property type="match status" value="1"/>
</dbReference>
<dbReference type="PANTHER" id="PTHR11659:SF0">
    <property type="entry name" value="GLUTAMYL-TRNA(GLN) AMIDOTRANSFERASE SUBUNIT B, MITOCHONDRIAL"/>
    <property type="match status" value="1"/>
</dbReference>
<dbReference type="Pfam" id="PF02934">
    <property type="entry name" value="GatB_N"/>
    <property type="match status" value="1"/>
</dbReference>
<dbReference type="Pfam" id="PF02637">
    <property type="entry name" value="GatB_Yqey"/>
    <property type="match status" value="1"/>
</dbReference>
<dbReference type="SMART" id="SM00845">
    <property type="entry name" value="GatB_Yqey"/>
    <property type="match status" value="1"/>
</dbReference>
<dbReference type="SUPFAM" id="SSF89095">
    <property type="entry name" value="GatB/YqeY motif"/>
    <property type="match status" value="1"/>
</dbReference>
<dbReference type="SUPFAM" id="SSF55931">
    <property type="entry name" value="Glutamine synthetase/guanido kinase"/>
    <property type="match status" value="1"/>
</dbReference>
<dbReference type="PROSITE" id="PS01234">
    <property type="entry name" value="GATB"/>
    <property type="match status" value="1"/>
</dbReference>
<proteinExistence type="inferred from homology"/>
<organism>
    <name type="scientific">Staphylococcus haemolyticus (strain JCSC1435)</name>
    <dbReference type="NCBI Taxonomy" id="279808"/>
    <lineage>
        <taxon>Bacteria</taxon>
        <taxon>Bacillati</taxon>
        <taxon>Bacillota</taxon>
        <taxon>Bacilli</taxon>
        <taxon>Bacillales</taxon>
        <taxon>Staphylococcaceae</taxon>
        <taxon>Staphylococcus</taxon>
    </lineage>
</organism>
<keyword id="KW-0067">ATP-binding</keyword>
<keyword id="KW-0436">Ligase</keyword>
<keyword id="KW-0547">Nucleotide-binding</keyword>
<keyword id="KW-0648">Protein biosynthesis</keyword>
<sequence>MHFETVIGLEVHVELKTDSKMFSPSPAHFGAEPNSNTNVIDLAYPGVLPVVNRRAVDWAMRASMALNMDIATNSKFDRKNYFYPDNPKAYQISQFDQPIGENGYIDIEVDGETKRIGITRLHMEEDAGKSTHKDGYSLVDLNRQGTPLIEIVSEPDIRSPKEAYAYLEKLRSIIQYTGVSDCKMEEGSLRCDANISLRPYGQEEFGTKTELKNLNSFNYVRKGLEYEEKRQEEELLNGGTIGQETRRFDESTGKTILMRVKEGSDDYRYFPEPDIVPLYVDEEWKECVRQTIPELPDERKAKYVNDLGLPEYDAHVLTLTKEMSDFFEGAIEKGADVKLTSNWLMGGVNEYLNKNQVELQDTKLTPENLAGMIKLIEDGTMSSKIAKKVFPELAENGGDAKQIMEDKGLVQISDEATLTKFVTEALDNNPQSVEDYKNGKGKAMGFLVGQIMKASKGQANPQKVNQILKQELDKR</sequence>
<gene>
    <name evidence="1" type="primary">gatB</name>
    <name type="ordered locus">SH1053</name>
</gene>
<protein>
    <recommendedName>
        <fullName evidence="1">Aspartyl/glutamyl-tRNA(Asn/Gln) amidotransferase subunit B</fullName>
        <shortName evidence="1">Asp/Glu-ADT subunit B</shortName>
        <ecNumber evidence="1">6.3.5.-</ecNumber>
    </recommendedName>
</protein>
<reference key="1">
    <citation type="journal article" date="2005" name="J. Bacteriol.">
        <title>Whole-genome sequencing of Staphylococcus haemolyticus uncovers the extreme plasticity of its genome and the evolution of human-colonizing staphylococcal species.</title>
        <authorList>
            <person name="Takeuchi F."/>
            <person name="Watanabe S."/>
            <person name="Baba T."/>
            <person name="Yuzawa H."/>
            <person name="Ito T."/>
            <person name="Morimoto Y."/>
            <person name="Kuroda M."/>
            <person name="Cui L."/>
            <person name="Takahashi M."/>
            <person name="Ankai A."/>
            <person name="Baba S."/>
            <person name="Fukui S."/>
            <person name="Lee J.C."/>
            <person name="Hiramatsu K."/>
        </authorList>
    </citation>
    <scope>NUCLEOTIDE SEQUENCE [LARGE SCALE GENOMIC DNA]</scope>
    <source>
        <strain>JCSC1435</strain>
    </source>
</reference>
<accession>Q4L7L3</accession>
<feature type="chain" id="PRO_0000241278" description="Aspartyl/glutamyl-tRNA(Asn/Gln) amidotransferase subunit B">
    <location>
        <begin position="1"/>
        <end position="475"/>
    </location>
</feature>
<name>GATB_STAHJ</name>